<feature type="chain" id="PRO_0000254105" description="Protein PBDC1">
    <location>
        <begin position="1"/>
        <end position="233"/>
    </location>
</feature>
<feature type="region of interest" description="Disordered" evidence="1">
    <location>
        <begin position="167"/>
        <end position="233"/>
    </location>
</feature>
<feature type="modified residue" description="Phosphoserine" evidence="3">
    <location>
        <position position="126"/>
    </location>
</feature>
<feature type="modified residue" description="Phosphoserine" evidence="5 7">
    <location>
        <position position="181"/>
    </location>
</feature>
<feature type="modified residue" description="Phosphoserine" evidence="4 5 6 7">
    <location>
        <position position="197"/>
    </location>
</feature>
<proteinExistence type="evidence at protein level"/>
<sequence>MAATSGTDEPVSGELVSVAHALSLPAESYGNDPDIEMAWAMRAMQHAEVYYKLISSVDPQFLKLTKVDDQIYSEFRKNFETLRIDVLDPEELKSESAKEKWRPFCLKFNGIVEDFNYGTLLRLDCSQGYTEENTIFAPRIQFFAIEIARNREGYNKAVYISVQDKEGEKGVNNGGEKRADSGEEENTKNGGEKGADSGEEKEEGINREDKTDKGGEKGKEADKEINKSGEKAM</sequence>
<name>PBDC1_HUMAN</name>
<keyword id="KW-0597">Phosphoprotein</keyword>
<keyword id="KW-1267">Proteomics identification</keyword>
<keyword id="KW-1185">Reference proteome</keyword>
<accession>Q9BVG4</accession>
<reference key="1">
    <citation type="journal article" date="2004" name="Genome Res.">
        <title>The status, quality, and expansion of the NIH full-length cDNA project: the Mammalian Gene Collection (MGC).</title>
        <authorList>
            <consortium name="The MGC Project Team"/>
        </authorList>
    </citation>
    <scope>NUCLEOTIDE SEQUENCE [LARGE SCALE MRNA]</scope>
    <source>
        <tissue>Leiomyosarcoma</tissue>
        <tissue>Rhabdomyosarcoma</tissue>
    </source>
</reference>
<reference key="2">
    <citation type="journal article" date="2007" name="Science">
        <title>ATM and ATR substrate analysis reveals extensive protein networks responsive to DNA damage.</title>
        <authorList>
            <person name="Matsuoka S."/>
            <person name="Ballif B.A."/>
            <person name="Smogorzewska A."/>
            <person name="McDonald E.R. III"/>
            <person name="Hurov K.E."/>
            <person name="Luo J."/>
            <person name="Bakalarski C.E."/>
            <person name="Zhao Z."/>
            <person name="Solimini N."/>
            <person name="Lerenthal Y."/>
            <person name="Shiloh Y."/>
            <person name="Gygi S.P."/>
            <person name="Elledge S.J."/>
        </authorList>
    </citation>
    <scope>PHOSPHORYLATION [LARGE SCALE ANALYSIS] AT SER-126</scope>
    <scope>IDENTIFICATION BY MASS SPECTROMETRY [LARGE SCALE ANALYSIS]</scope>
    <source>
        <tissue>Embryonic kidney</tissue>
    </source>
</reference>
<reference key="3">
    <citation type="journal article" date="2008" name="Proc. Natl. Acad. Sci. U.S.A.">
        <title>A quantitative atlas of mitotic phosphorylation.</title>
        <authorList>
            <person name="Dephoure N."/>
            <person name="Zhou C."/>
            <person name="Villen J."/>
            <person name="Beausoleil S.A."/>
            <person name="Bakalarski C.E."/>
            <person name="Elledge S.J."/>
            <person name="Gygi S.P."/>
        </authorList>
    </citation>
    <scope>IDENTIFICATION BY MASS SPECTROMETRY [LARGE SCALE ANALYSIS]</scope>
    <source>
        <tissue>Cervix carcinoma</tissue>
    </source>
</reference>
<reference key="4">
    <citation type="journal article" date="2008" name="Proteomics">
        <title>Large-scale phosphoproteome analysis of human liver tissue by enrichment and fractionation of phosphopeptides with strong anion exchange chromatography.</title>
        <authorList>
            <person name="Han G."/>
            <person name="Ye M."/>
            <person name="Zhou H."/>
            <person name="Jiang X."/>
            <person name="Feng S."/>
            <person name="Jiang X."/>
            <person name="Tian R."/>
            <person name="Wan D."/>
            <person name="Zou H."/>
            <person name="Gu J."/>
        </authorList>
    </citation>
    <scope>PHOSPHORYLATION [LARGE SCALE ANALYSIS] AT SER-197</scope>
    <scope>IDENTIFICATION BY MASS SPECTROMETRY [LARGE SCALE ANALYSIS]</scope>
    <source>
        <tissue>Liver</tissue>
    </source>
</reference>
<reference key="5">
    <citation type="journal article" date="2011" name="BMC Syst. Biol.">
        <title>Initial characterization of the human central proteome.</title>
        <authorList>
            <person name="Burkard T.R."/>
            <person name="Planyavsky M."/>
            <person name="Kaupe I."/>
            <person name="Breitwieser F.P."/>
            <person name="Buerckstuemmer T."/>
            <person name="Bennett K.L."/>
            <person name="Superti-Furga G."/>
            <person name="Colinge J."/>
        </authorList>
    </citation>
    <scope>IDENTIFICATION BY MASS SPECTROMETRY [LARGE SCALE ANALYSIS]</scope>
</reference>
<reference key="6">
    <citation type="journal article" date="2011" name="Sci. Signal.">
        <title>System-wide temporal characterization of the proteome and phosphoproteome of human embryonic stem cell differentiation.</title>
        <authorList>
            <person name="Rigbolt K.T."/>
            <person name="Prokhorova T.A."/>
            <person name="Akimov V."/>
            <person name="Henningsen J."/>
            <person name="Johansen P.T."/>
            <person name="Kratchmarova I."/>
            <person name="Kassem M."/>
            <person name="Mann M."/>
            <person name="Olsen J.V."/>
            <person name="Blagoev B."/>
        </authorList>
    </citation>
    <scope>PHOSPHORYLATION [LARGE SCALE ANALYSIS] AT SER-181 AND SER-197</scope>
    <scope>IDENTIFICATION BY MASS SPECTROMETRY [LARGE SCALE ANALYSIS]</scope>
</reference>
<reference key="7">
    <citation type="journal article" date="2013" name="J. Proteome Res.">
        <title>Toward a comprehensive characterization of a human cancer cell phosphoproteome.</title>
        <authorList>
            <person name="Zhou H."/>
            <person name="Di Palma S."/>
            <person name="Preisinger C."/>
            <person name="Peng M."/>
            <person name="Polat A.N."/>
            <person name="Heck A.J."/>
            <person name="Mohammed S."/>
        </authorList>
    </citation>
    <scope>PHOSPHORYLATION [LARGE SCALE ANALYSIS] AT SER-197</scope>
    <scope>IDENTIFICATION BY MASS SPECTROMETRY [LARGE SCALE ANALYSIS]</scope>
    <source>
        <tissue>Erythroleukemia</tissue>
    </source>
</reference>
<reference key="8">
    <citation type="journal article" date="2014" name="J. Proteomics">
        <title>An enzyme assisted RP-RPLC approach for in-depth analysis of human liver phosphoproteome.</title>
        <authorList>
            <person name="Bian Y."/>
            <person name="Song C."/>
            <person name="Cheng K."/>
            <person name="Dong M."/>
            <person name="Wang F."/>
            <person name="Huang J."/>
            <person name="Sun D."/>
            <person name="Wang L."/>
            <person name="Ye M."/>
            <person name="Zou H."/>
        </authorList>
    </citation>
    <scope>PHOSPHORYLATION [LARGE SCALE ANALYSIS] AT SER-181 AND SER-197</scope>
    <scope>IDENTIFICATION BY MASS SPECTROMETRY [LARGE SCALE ANALYSIS]</scope>
    <source>
        <tissue>Liver</tissue>
    </source>
</reference>
<dbReference type="EMBL" id="BC001220">
    <property type="protein sequence ID" value="AAH01220.1"/>
    <property type="molecule type" value="mRNA"/>
</dbReference>
<dbReference type="EMBL" id="BC051894">
    <property type="protein sequence ID" value="AAH51894.1"/>
    <property type="molecule type" value="mRNA"/>
</dbReference>
<dbReference type="CCDS" id="CCDS14432.1"/>
<dbReference type="RefSeq" id="NP_001287817.1">
    <property type="nucleotide sequence ID" value="NM_001300888.1"/>
</dbReference>
<dbReference type="RefSeq" id="NP_057584.2">
    <property type="nucleotide sequence ID" value="NM_016500.3"/>
</dbReference>
<dbReference type="SMR" id="Q9BVG4"/>
<dbReference type="BioGRID" id="119416">
    <property type="interactions" value="45"/>
</dbReference>
<dbReference type="FunCoup" id="Q9BVG4">
    <property type="interactions" value="234"/>
</dbReference>
<dbReference type="IntAct" id="Q9BVG4">
    <property type="interactions" value="19"/>
</dbReference>
<dbReference type="MINT" id="Q9BVG4"/>
<dbReference type="STRING" id="9606.ENSP00000362456"/>
<dbReference type="GlyGen" id="Q9BVG4">
    <property type="glycosylation" value="1 site, 1 O-linked glycan (1 site)"/>
</dbReference>
<dbReference type="iPTMnet" id="Q9BVG4"/>
<dbReference type="MetOSite" id="Q9BVG4"/>
<dbReference type="PhosphoSitePlus" id="Q9BVG4"/>
<dbReference type="BioMuta" id="PBDC1"/>
<dbReference type="DMDM" id="74733325"/>
<dbReference type="jPOST" id="Q9BVG4"/>
<dbReference type="MassIVE" id="Q9BVG4"/>
<dbReference type="PaxDb" id="9606-ENSP00000362456"/>
<dbReference type="PeptideAtlas" id="Q9BVG4"/>
<dbReference type="ProteomicsDB" id="79200"/>
<dbReference type="Pumba" id="Q9BVG4"/>
<dbReference type="Antibodypedia" id="507">
    <property type="antibodies" value="197 antibodies from 18 providers"/>
</dbReference>
<dbReference type="DNASU" id="51260"/>
<dbReference type="Ensembl" id="ENST00000373358.8">
    <property type="protein sequence ID" value="ENSP00000362456.3"/>
    <property type="gene ID" value="ENSG00000102390.12"/>
</dbReference>
<dbReference type="GeneID" id="51260"/>
<dbReference type="KEGG" id="hsa:51260"/>
<dbReference type="MANE-Select" id="ENST00000373358.8">
    <property type="protein sequence ID" value="ENSP00000362456.3"/>
    <property type="RefSeq nucleotide sequence ID" value="NM_016500.5"/>
    <property type="RefSeq protein sequence ID" value="NP_057584.2"/>
</dbReference>
<dbReference type="UCSC" id="uc004ecl.2">
    <property type="organism name" value="human"/>
</dbReference>
<dbReference type="AGR" id="HGNC:28790"/>
<dbReference type="CTD" id="51260"/>
<dbReference type="GeneCards" id="PBDC1"/>
<dbReference type="HGNC" id="HGNC:28790">
    <property type="gene designation" value="PBDC1"/>
</dbReference>
<dbReference type="HPA" id="ENSG00000102390">
    <property type="expression patterns" value="Low tissue specificity"/>
</dbReference>
<dbReference type="neXtProt" id="NX_Q9BVG4"/>
<dbReference type="OpenTargets" id="ENSG00000102390"/>
<dbReference type="PharmGKB" id="PA128394657"/>
<dbReference type="VEuPathDB" id="HostDB:ENSG00000102390"/>
<dbReference type="eggNOG" id="KOG4093">
    <property type="taxonomic scope" value="Eukaryota"/>
</dbReference>
<dbReference type="GeneTree" id="ENSGT00390000016333"/>
<dbReference type="HOGENOM" id="CLU_103791_0_0_1"/>
<dbReference type="InParanoid" id="Q9BVG4"/>
<dbReference type="OMA" id="MELMHGA"/>
<dbReference type="OrthoDB" id="10248897at2759"/>
<dbReference type="PAN-GO" id="Q9BVG4">
    <property type="GO annotations" value="0 GO annotations based on evolutionary models"/>
</dbReference>
<dbReference type="PhylomeDB" id="Q9BVG4"/>
<dbReference type="TreeFam" id="TF314442"/>
<dbReference type="PathwayCommons" id="Q9BVG4"/>
<dbReference type="SignaLink" id="Q9BVG4"/>
<dbReference type="BioGRID-ORCS" id="51260">
    <property type="hits" value="7 hits in 774 CRISPR screens"/>
</dbReference>
<dbReference type="ChiTaRS" id="PBDC1">
    <property type="organism name" value="human"/>
</dbReference>
<dbReference type="GenomeRNAi" id="51260"/>
<dbReference type="Pharos" id="Q9BVG4">
    <property type="development level" value="Tdark"/>
</dbReference>
<dbReference type="PRO" id="PR:Q9BVG4"/>
<dbReference type="Proteomes" id="UP000005640">
    <property type="component" value="Chromosome X"/>
</dbReference>
<dbReference type="RNAct" id="Q9BVG4">
    <property type="molecule type" value="protein"/>
</dbReference>
<dbReference type="Bgee" id="ENSG00000102390">
    <property type="expression patterns" value="Expressed in epithelial cell of pancreas and 184 other cell types or tissues"/>
</dbReference>
<dbReference type="ExpressionAtlas" id="Q9BVG4">
    <property type="expression patterns" value="baseline and differential"/>
</dbReference>
<dbReference type="Gene3D" id="1.10.3560.10">
    <property type="entry name" value="yst0336 like domain"/>
    <property type="match status" value="1"/>
</dbReference>
<dbReference type="InterPro" id="IPR023139">
    <property type="entry name" value="PBDC1-like_dom_sf"/>
</dbReference>
<dbReference type="InterPro" id="IPR008476">
    <property type="entry name" value="PBDC1_metazoa/fungi"/>
</dbReference>
<dbReference type="InterPro" id="IPR021148">
    <property type="entry name" value="Polysacc_synth_dom"/>
</dbReference>
<dbReference type="PANTHER" id="PTHR13410">
    <property type="entry name" value="PROTEIN PBDC1"/>
    <property type="match status" value="1"/>
</dbReference>
<dbReference type="PANTHER" id="PTHR13410:SF9">
    <property type="entry name" value="PROTEIN PBDC1"/>
    <property type="match status" value="1"/>
</dbReference>
<dbReference type="Pfam" id="PF04669">
    <property type="entry name" value="PBDC1"/>
    <property type="match status" value="1"/>
</dbReference>
<protein>
    <recommendedName>
        <fullName>Protein PBDC1</fullName>
    </recommendedName>
    <alternativeName>
        <fullName>Polysaccharide biosynthesis domain-containing protein 1</fullName>
    </alternativeName>
</protein>
<comment type="interaction">
    <interactant intactId="EBI-722092">
        <id>Q9BVG4</id>
    </interactant>
    <interactant intactId="EBI-349854">
        <id>P13569</id>
        <label>CFTR</label>
    </interactant>
    <organismsDiffer>false</organismsDiffer>
    <experiments>3</experiments>
</comment>
<comment type="similarity">
    <text evidence="2">Belongs to the PBDC1 family.</text>
</comment>
<gene>
    <name type="primary">PBDC1</name>
    <name type="synonym">CXorf26</name>
</gene>
<organism>
    <name type="scientific">Homo sapiens</name>
    <name type="common">Human</name>
    <dbReference type="NCBI Taxonomy" id="9606"/>
    <lineage>
        <taxon>Eukaryota</taxon>
        <taxon>Metazoa</taxon>
        <taxon>Chordata</taxon>
        <taxon>Craniata</taxon>
        <taxon>Vertebrata</taxon>
        <taxon>Euteleostomi</taxon>
        <taxon>Mammalia</taxon>
        <taxon>Eutheria</taxon>
        <taxon>Euarchontoglires</taxon>
        <taxon>Primates</taxon>
        <taxon>Haplorrhini</taxon>
        <taxon>Catarrhini</taxon>
        <taxon>Hominidae</taxon>
        <taxon>Homo</taxon>
    </lineage>
</organism>
<evidence type="ECO:0000256" key="1">
    <source>
        <dbReference type="SAM" id="MobiDB-lite"/>
    </source>
</evidence>
<evidence type="ECO:0000305" key="2"/>
<evidence type="ECO:0007744" key="3">
    <source>
    </source>
</evidence>
<evidence type="ECO:0007744" key="4">
    <source>
    </source>
</evidence>
<evidence type="ECO:0007744" key="5">
    <source>
    </source>
</evidence>
<evidence type="ECO:0007744" key="6">
    <source>
    </source>
</evidence>
<evidence type="ECO:0007744" key="7">
    <source>
    </source>
</evidence>